<proteinExistence type="inferred from homology"/>
<comment type="function">
    <text evidence="1">Component of light signal transduction machinery. Involved in fruit pigmentation and fruit nutritional quality. Acts as a negative regulator of fruit pigmentation. Probably acts by participating in the CDD complex, a complex probably required to regulate the activity of ubiquitin conjugating enzymes. Repression of photomorphogenesis is probably mediated by ubiquitination and subsequent degradation of photomorphogenesis-promoting factors such as HY5 (By similarity).</text>
</comment>
<comment type="pathway">
    <text>Protein modification; protein ubiquitination.</text>
</comment>
<comment type="subunit">
    <text evidence="1">Probable component of the CDD complex, which probably also contains DET1.</text>
</comment>
<comment type="subcellular location">
    <subcellularLocation>
        <location evidence="1">Nucleus</location>
    </subcellularLocation>
</comment>
<comment type="similarity">
    <text evidence="2">Belongs to the DDB1 family.</text>
</comment>
<organism>
    <name type="scientific">Solanum cheesmaniae</name>
    <name type="common">Galapagos Island tomato</name>
    <name type="synonym">Lycopersicon cheesmaniae</name>
    <dbReference type="NCBI Taxonomy" id="142759"/>
    <lineage>
        <taxon>Eukaryota</taxon>
        <taxon>Viridiplantae</taxon>
        <taxon>Streptophyta</taxon>
        <taxon>Embryophyta</taxon>
        <taxon>Tracheophyta</taxon>
        <taxon>Spermatophyta</taxon>
        <taxon>Magnoliopsida</taxon>
        <taxon>eudicotyledons</taxon>
        <taxon>Gunneridae</taxon>
        <taxon>Pentapetalae</taxon>
        <taxon>asterids</taxon>
        <taxon>lamiids</taxon>
        <taxon>Solanales</taxon>
        <taxon>Solanaceae</taxon>
        <taxon>Solanoideae</taxon>
        <taxon>Solaneae</taxon>
        <taxon>Solanum</taxon>
        <taxon>Solanum subgen. Lycopersicon</taxon>
    </lineage>
</organism>
<accession>Q6E7D1</accession>
<name>DDB1_SOLCE</name>
<gene>
    <name type="primary">DDB1</name>
</gene>
<sequence length="1095" mass="122293">MSVWNYVVTAHKPTNVTHSCVGNFTGPQELNLIIAKCTRIEIHLLTPQGLQCICLQPMLDVPIYGRIATLELFRPHGETQDLLFIATERYKFCVLQWDTEASEVITRAMGDVSDRIGRPTDNGQIGIIDPDCRLIGLHLYDGLFKVIPFDNKGQLKEAFNIRLEELQVLDIKFLYGCPKPTIVVLYQDNKDARHVKTYEVSLKDKDFIEGPWAQNNLDNGASLLIPVPPPLCGVLIIGEETIVYCSASAFKAIPIRPSITRAYGRVDADGSRYLLGDHNGLLHLLVITHEKEKVTGLKIELLGETSIASTISYLDNAFVFIGSSYGDSQLVKLNLQPDTKGSYVEVLERYVNLGPIVDFCVVDLERQGQGQVVTCSGAYKDGSLRIVRNGIGINEQASVELQGIKGMWSLRSATDDPYDTFLVVSFISETRVLAMNLEDELEETEIEGFNSQVQTLFCHDAVYNQLVQVTSNSVRLVSSTSRDLKNEWFAPVGYSVNVATANATQVLLATGGGHLVYLEIGDGVLNEVKYAKLDYDISCLDINPIGENPNYSNIAAVGMWTDISVRIYSLPDLNLITKEQLGGEIIPRSVLMCSFEGISYLLCALGDGHLLNFVLSMSTGELTDRKKVSLGTQPITLRTFSSKDTTHVFAASDRPTVIYSSNKKLLYSNVNLKEVSHMCPFNVAAFPDSLAIAKEGELTIGTIDEIQKLHIRSIPLGEHARRISHQEQTRTFALCSVKYTQSNADDPEMHFVRLLDDQTFEFISTYPLDQFEYGCSILSCSFSDDSNVYYCIGTAYVMPEENEPTKGRILVFIVEDGKLQLIAEKETKGAVYSLNAFNGKLLAAINQKIQLYKWASREDGGSRELQTECGHHGHILALYVQTRGDFIVVGDLMKSISLLIFKHEEGAIEERARDYNANWMSAVEILDDDIYLGAENNFNLFTVRKNSEGATDEERSRLEVVGEYHLGEFVNRFRHGSLVMRLPDSDVGQIPTVIFGTVNGVIGVIASLPHDQYLFLEKLQTNLRKVIKGVGGLSHEQWRSFYNEKKTVDAKNFLDGDLIESFLDLSRNRMEEISKAMSVPVEELMKRVEELTRLH</sequence>
<keyword id="KW-0539">Nucleus</keyword>
<keyword id="KW-0607">Phytochrome signaling pathway</keyword>
<protein>
    <recommendedName>
        <fullName>DNA damage-binding protein 1</fullName>
    </recommendedName>
    <alternativeName>
        <fullName>UV-damaged DNA-binding protein 1</fullName>
    </alternativeName>
</protein>
<feature type="chain" id="PRO_0000079841" description="DNA damage-binding protein 1">
    <location>
        <begin position="1"/>
        <end position="1095"/>
    </location>
</feature>
<evidence type="ECO:0000250" key="1"/>
<evidence type="ECO:0000305" key="2"/>
<dbReference type="EMBL" id="AY531661">
    <property type="protein sequence ID" value="AAT66742.1"/>
    <property type="molecule type" value="Genomic_DNA"/>
</dbReference>
<dbReference type="SMR" id="Q6E7D1"/>
<dbReference type="UniPathway" id="UPA00143"/>
<dbReference type="GO" id="GO:0005634">
    <property type="term" value="C:nucleus"/>
    <property type="evidence" value="ECO:0007669"/>
    <property type="project" value="UniProtKB-SubCell"/>
</dbReference>
<dbReference type="GO" id="GO:0003676">
    <property type="term" value="F:nucleic acid binding"/>
    <property type="evidence" value="ECO:0007669"/>
    <property type="project" value="InterPro"/>
</dbReference>
<dbReference type="GO" id="GO:0016567">
    <property type="term" value="P:protein ubiquitination"/>
    <property type="evidence" value="ECO:0007669"/>
    <property type="project" value="UniProtKB-UniPathway"/>
</dbReference>
<dbReference type="GO" id="GO:0009585">
    <property type="term" value="P:red, far-red light phototransduction"/>
    <property type="evidence" value="ECO:0007669"/>
    <property type="project" value="UniProtKB-KW"/>
</dbReference>
<dbReference type="FunFam" id="2.130.10.10:FF:000070">
    <property type="entry name" value="DNA damage-binding protein 1"/>
    <property type="match status" value="1"/>
</dbReference>
<dbReference type="FunFam" id="1.10.150.910:FF:000003">
    <property type="entry name" value="DNA damage-binding protein 1a"/>
    <property type="match status" value="1"/>
</dbReference>
<dbReference type="FunFam" id="2.130.10.10:FF:000182">
    <property type="entry name" value="DNA damage-binding protein 1a"/>
    <property type="match status" value="1"/>
</dbReference>
<dbReference type="FunFam" id="2.130.10.10:FF:000267">
    <property type="entry name" value="DNA damage-binding protein 1a"/>
    <property type="match status" value="1"/>
</dbReference>
<dbReference type="Gene3D" id="1.10.150.910">
    <property type="match status" value="1"/>
</dbReference>
<dbReference type="Gene3D" id="2.130.10.10">
    <property type="entry name" value="YVTN repeat-like/Quinoprotein amine dehydrogenase"/>
    <property type="match status" value="3"/>
</dbReference>
<dbReference type="InterPro" id="IPR018846">
    <property type="entry name" value="Beta-prop_RSE1/DDB1/CPSF1_1st"/>
</dbReference>
<dbReference type="InterPro" id="IPR004871">
    <property type="entry name" value="Cleavage/polyA-sp_fac_asu_C"/>
</dbReference>
<dbReference type="InterPro" id="IPR011047">
    <property type="entry name" value="Quinoprotein_ADH-like_sf"/>
</dbReference>
<dbReference type="InterPro" id="IPR050358">
    <property type="entry name" value="RSE1/DDB1/CFT1/CPSF1"/>
</dbReference>
<dbReference type="InterPro" id="IPR015943">
    <property type="entry name" value="WD40/YVTN_repeat-like_dom_sf"/>
</dbReference>
<dbReference type="PANTHER" id="PTHR10644">
    <property type="entry name" value="DNA REPAIR/RNA PROCESSING CPSF FAMILY"/>
    <property type="match status" value="1"/>
</dbReference>
<dbReference type="Pfam" id="PF10433">
    <property type="entry name" value="Beta-prop_RSE1_1st"/>
    <property type="match status" value="1"/>
</dbReference>
<dbReference type="Pfam" id="PF23726">
    <property type="entry name" value="Beta-prop_RSE1_2nd"/>
    <property type="match status" value="1"/>
</dbReference>
<dbReference type="Pfam" id="PF03178">
    <property type="entry name" value="CPSF_A"/>
    <property type="match status" value="1"/>
</dbReference>
<dbReference type="SUPFAM" id="SSF50998">
    <property type="entry name" value="Quinoprotein alcohol dehydrogenase-like"/>
    <property type="match status" value="1"/>
</dbReference>
<reference key="1">
    <citation type="journal article" date="2004" name="Proc. Natl. Acad. Sci. U.S.A.">
        <title>Manipulation of light signal transduction as a means of modifying fruit nutritional quality in tomato.</title>
        <authorList>
            <person name="Liu Y."/>
            <person name="Roof S."/>
            <person name="Ye Z."/>
            <person name="Barry C."/>
            <person name="van Tuinen A."/>
            <person name="Vrebalov J."/>
            <person name="Bowler C."/>
            <person name="Giovannoni J."/>
        </authorList>
    </citation>
    <scope>NUCLEOTIDE SEQUENCE [GENOMIC DNA]</scope>
</reference>